<dbReference type="EMBL" id="AY178864">
    <property type="protein sequence ID" value="AAP29371.2"/>
    <property type="molecule type" value="Genomic_DNA"/>
</dbReference>
<dbReference type="RefSeq" id="NP_848039.1">
    <property type="nucleotide sequence ID" value="NC_004766.1"/>
</dbReference>
<dbReference type="GeneID" id="807363"/>
<dbReference type="GO" id="GO:0009507">
    <property type="term" value="C:chloroplast"/>
    <property type="evidence" value="ECO:0007669"/>
    <property type="project" value="UniProtKB-SubCell"/>
</dbReference>
<dbReference type="GO" id="GO:0003723">
    <property type="term" value="F:RNA binding"/>
    <property type="evidence" value="ECO:0007669"/>
    <property type="project" value="UniProtKB-KW"/>
</dbReference>
<dbReference type="GO" id="GO:0006397">
    <property type="term" value="P:mRNA processing"/>
    <property type="evidence" value="ECO:0007669"/>
    <property type="project" value="UniProtKB-KW"/>
</dbReference>
<dbReference type="GO" id="GO:0008380">
    <property type="term" value="P:RNA splicing"/>
    <property type="evidence" value="ECO:0007669"/>
    <property type="project" value="UniProtKB-UniRule"/>
</dbReference>
<dbReference type="GO" id="GO:0008033">
    <property type="term" value="P:tRNA processing"/>
    <property type="evidence" value="ECO:0007669"/>
    <property type="project" value="UniProtKB-KW"/>
</dbReference>
<dbReference type="HAMAP" id="MF_01390">
    <property type="entry name" value="MatK"/>
    <property type="match status" value="1"/>
</dbReference>
<dbReference type="InterPro" id="IPR024937">
    <property type="entry name" value="Domain_X"/>
</dbReference>
<dbReference type="InterPro" id="IPR002866">
    <property type="entry name" value="Maturase_MatK"/>
</dbReference>
<dbReference type="InterPro" id="IPR024942">
    <property type="entry name" value="Maturase_MatK_N"/>
</dbReference>
<dbReference type="PANTHER" id="PTHR34811">
    <property type="entry name" value="MATURASE K"/>
    <property type="match status" value="1"/>
</dbReference>
<dbReference type="PANTHER" id="PTHR34811:SF1">
    <property type="entry name" value="MATURASE K"/>
    <property type="match status" value="1"/>
</dbReference>
<dbReference type="Pfam" id="PF01348">
    <property type="entry name" value="Intron_maturas2"/>
    <property type="match status" value="1"/>
</dbReference>
<dbReference type="Pfam" id="PF01824">
    <property type="entry name" value="MatK_N"/>
    <property type="match status" value="1"/>
</dbReference>
<keyword id="KW-0150">Chloroplast</keyword>
<keyword id="KW-0507">mRNA processing</keyword>
<keyword id="KW-0934">Plastid</keyword>
<keyword id="KW-0691">RNA editing</keyword>
<keyword id="KW-0694">RNA-binding</keyword>
<keyword id="KW-0819">tRNA processing</keyword>
<gene>
    <name evidence="1" type="primary">matK</name>
</gene>
<geneLocation type="chloroplast"/>
<name>MATK_ADICA</name>
<proteinExistence type="evidence at transcript level"/>
<accession>Q85FP0</accession>
<evidence type="ECO:0000255" key="1">
    <source>
        <dbReference type="HAMAP-Rule" id="MF_01390"/>
    </source>
</evidence>
<evidence type="ECO:0000269" key="2">
    <source>
    </source>
</evidence>
<protein>
    <recommendedName>
        <fullName evidence="1">Maturase K</fullName>
    </recommendedName>
    <alternativeName>
        <fullName evidence="1">Intron maturase</fullName>
    </alternativeName>
</protein>
<feature type="chain" id="PRO_0000143213" description="Maturase K">
    <location>
        <begin position="1"/>
        <end position="500"/>
    </location>
</feature>
<comment type="function">
    <text evidence="1">Usually encoded in the trnK tRNA gene intron. Probably assists in splicing its own and other chloroplast group II introns.</text>
</comment>
<comment type="subcellular location">
    <subcellularLocation>
        <location>Plastid</location>
        <location>Chloroplast</location>
    </subcellularLocation>
</comment>
<comment type="RNA editing">
    <location>
        <position position="1" evidence="2"/>
    </location>
    <location>
        <position position="165" evidence="2"/>
    </location>
    <location>
        <position position="333" evidence="2"/>
    </location>
    <location>
        <position position="334" evidence="2"/>
    </location>
    <text>The initiator methionine is created by RNA editing.</text>
</comment>
<comment type="similarity">
    <text evidence="1">Belongs to the intron maturase 2 family. MatK subfamily.</text>
</comment>
<sequence>MKVNYGSPAKSGPLHKNGEFYINKNCFLHPLLFLSEENFYLTDGKRRSHGADANLVFGAWSTVAVKRLIGSVRDPNLNFLKIYDSVSVRNLTDGLDVDLYLHPLLKMTYLILGIALFPKIRAETSSKSKMLQSIHSMFLFLEDRFSKSNHILEADLPHNLHLETLIRLFRRQIKDVSFLHLLRIVFRKRKIFCGKTFYSPGGGQDGSVDIPVRNFYIFEIDSLLLIPWKQVYKFRVNYLSPIDSCNIIRKEIYASAYKFKWNKASIDYSFSRSLWIHYGRWRNKFLIASEGTHYFVKKMLYYLWILLKYHFHYRIKSNEPWIRKLLPTSCVSFLGYTLLAQLVSKNVRIETVTDLYISILGGKKFYPKIPNSIIITTLAKQRFCDFTGRPIGKSAWVTSTDDKIIDGYVQLWQVFSLYYGASMNQYRLRRLIFLLQMSCDSTLAGKHRSTIRLLRCKSNVEALNQILASRKFELSSSRRVWRSSSIRSVLVQFTVLDIGL</sequence>
<organism>
    <name type="scientific">Adiantum capillus-veneris</name>
    <name type="common">Maidenhair fern</name>
    <dbReference type="NCBI Taxonomy" id="13818"/>
    <lineage>
        <taxon>Eukaryota</taxon>
        <taxon>Viridiplantae</taxon>
        <taxon>Streptophyta</taxon>
        <taxon>Embryophyta</taxon>
        <taxon>Tracheophyta</taxon>
        <taxon>Polypodiopsida</taxon>
        <taxon>Polypodiidae</taxon>
        <taxon>Polypodiales</taxon>
        <taxon>Pteridineae</taxon>
        <taxon>Pteridaceae</taxon>
        <taxon>Vittarioideae</taxon>
        <taxon>Adiantum</taxon>
    </lineage>
</organism>
<reference key="1">
    <citation type="journal article" date="2003" name="DNA Res.">
        <title>Complete nucleotide sequence of the chloroplast genome from a leptosporangiate fern, Adiantum capillus-veneris L.</title>
        <authorList>
            <person name="Wolf P.G."/>
            <person name="Rowe C.A."/>
            <person name="Sinclair R.B."/>
            <person name="Hasebe M."/>
        </authorList>
    </citation>
    <scope>NUCLEOTIDE SEQUENCE [LARGE SCALE GENOMIC DNA]</scope>
</reference>
<reference key="2">
    <citation type="journal article" date="2004" name="Gene">
        <title>High levels of RNA editing in a vascular plant chloroplast genome: analysis of transcripts from the fern Adiantum capillus-veneris.</title>
        <authorList>
            <person name="Wolf P.G."/>
            <person name="Rowe C.A."/>
            <person name="Hasebe M."/>
        </authorList>
    </citation>
    <scope>NUCLEOTIDE SEQUENCE [GENOMIC DNA]</scope>
    <scope>RNA EDITING</scope>
    <source>
        <tissue>Frond</tissue>
    </source>
</reference>